<accession>B0VSK0</accession>
<protein>
    <recommendedName>
        <fullName evidence="1">tRNA uridine(34) hydroxylase</fullName>
        <ecNumber evidence="1">1.14.-.-</ecNumber>
    </recommendedName>
    <alternativeName>
        <fullName evidence="1">tRNA hydroxylation protein O</fullName>
    </alternativeName>
</protein>
<feature type="chain" id="PRO_1000200334" description="tRNA uridine(34) hydroxylase">
    <location>
        <begin position="1"/>
        <end position="314"/>
    </location>
</feature>
<feature type="domain" description="Rhodanese" evidence="1">
    <location>
        <begin position="140"/>
        <end position="234"/>
    </location>
</feature>
<feature type="active site" description="Cysteine persulfide intermediate" evidence="1">
    <location>
        <position position="194"/>
    </location>
</feature>
<keyword id="KW-0560">Oxidoreductase</keyword>
<keyword id="KW-0819">tRNA processing</keyword>
<comment type="function">
    <text evidence="1">Catalyzes oxygen-dependent 5-hydroxyuridine (ho5U) modification at position 34 in tRNAs.</text>
</comment>
<comment type="catalytic activity">
    <reaction evidence="1">
        <text>uridine(34) in tRNA + AH2 + O2 = 5-hydroxyuridine(34) in tRNA + A + H2O</text>
        <dbReference type="Rhea" id="RHEA:64224"/>
        <dbReference type="Rhea" id="RHEA-COMP:11727"/>
        <dbReference type="Rhea" id="RHEA-COMP:13381"/>
        <dbReference type="ChEBI" id="CHEBI:13193"/>
        <dbReference type="ChEBI" id="CHEBI:15377"/>
        <dbReference type="ChEBI" id="CHEBI:15379"/>
        <dbReference type="ChEBI" id="CHEBI:17499"/>
        <dbReference type="ChEBI" id="CHEBI:65315"/>
        <dbReference type="ChEBI" id="CHEBI:136877"/>
    </reaction>
</comment>
<comment type="similarity">
    <text evidence="1">Belongs to the TrhO family.</text>
</comment>
<proteinExistence type="inferred from homology"/>
<evidence type="ECO:0000255" key="1">
    <source>
        <dbReference type="HAMAP-Rule" id="MF_00469"/>
    </source>
</evidence>
<organism>
    <name type="scientific">Acinetobacter baumannii (strain SDF)</name>
    <dbReference type="NCBI Taxonomy" id="509170"/>
    <lineage>
        <taxon>Bacteria</taxon>
        <taxon>Pseudomonadati</taxon>
        <taxon>Pseudomonadota</taxon>
        <taxon>Gammaproteobacteria</taxon>
        <taxon>Moraxellales</taxon>
        <taxon>Moraxellaceae</taxon>
        <taxon>Acinetobacter</taxon>
        <taxon>Acinetobacter calcoaceticus/baumannii complex</taxon>
    </lineage>
</organism>
<dbReference type="EC" id="1.14.-.-" evidence="1"/>
<dbReference type="EMBL" id="CU468230">
    <property type="protein sequence ID" value="CAP00140.1"/>
    <property type="molecule type" value="Genomic_DNA"/>
</dbReference>
<dbReference type="SMR" id="B0VSK0"/>
<dbReference type="KEGG" id="abm:ABSDF0768"/>
<dbReference type="HOGENOM" id="CLU_038878_0_0_6"/>
<dbReference type="BioCyc" id="ABAU509170:GCL9-625-MONOMER"/>
<dbReference type="Proteomes" id="UP000001741">
    <property type="component" value="Chromosome"/>
</dbReference>
<dbReference type="GO" id="GO:0016705">
    <property type="term" value="F:oxidoreductase activity, acting on paired donors, with incorporation or reduction of molecular oxygen"/>
    <property type="evidence" value="ECO:0007669"/>
    <property type="project" value="UniProtKB-UniRule"/>
</dbReference>
<dbReference type="GO" id="GO:0006400">
    <property type="term" value="P:tRNA modification"/>
    <property type="evidence" value="ECO:0007669"/>
    <property type="project" value="UniProtKB-UniRule"/>
</dbReference>
<dbReference type="CDD" id="cd01518">
    <property type="entry name" value="RHOD_YceA"/>
    <property type="match status" value="1"/>
</dbReference>
<dbReference type="Gene3D" id="3.30.70.100">
    <property type="match status" value="1"/>
</dbReference>
<dbReference type="Gene3D" id="3.40.250.10">
    <property type="entry name" value="Rhodanese-like domain"/>
    <property type="match status" value="1"/>
</dbReference>
<dbReference type="HAMAP" id="MF_00469">
    <property type="entry name" value="TrhO"/>
    <property type="match status" value="1"/>
</dbReference>
<dbReference type="InterPro" id="IPR001763">
    <property type="entry name" value="Rhodanese-like_dom"/>
</dbReference>
<dbReference type="InterPro" id="IPR036873">
    <property type="entry name" value="Rhodanese-like_dom_sf"/>
</dbReference>
<dbReference type="InterPro" id="IPR020936">
    <property type="entry name" value="TrhO"/>
</dbReference>
<dbReference type="InterPro" id="IPR040503">
    <property type="entry name" value="TRHO_N"/>
</dbReference>
<dbReference type="NCBIfam" id="NF001136">
    <property type="entry name" value="PRK00142.1-4"/>
    <property type="match status" value="1"/>
</dbReference>
<dbReference type="PANTHER" id="PTHR43268:SF3">
    <property type="entry name" value="RHODANESE-LIKE DOMAIN-CONTAINING PROTEIN 7-RELATED"/>
    <property type="match status" value="1"/>
</dbReference>
<dbReference type="PANTHER" id="PTHR43268">
    <property type="entry name" value="THIOSULFATE SULFURTRANSFERASE/RHODANESE-LIKE DOMAIN-CONTAINING PROTEIN 2"/>
    <property type="match status" value="1"/>
</dbReference>
<dbReference type="Pfam" id="PF00581">
    <property type="entry name" value="Rhodanese"/>
    <property type="match status" value="1"/>
</dbReference>
<dbReference type="Pfam" id="PF17773">
    <property type="entry name" value="UPF0176_N"/>
    <property type="match status" value="1"/>
</dbReference>
<dbReference type="SMART" id="SM00450">
    <property type="entry name" value="RHOD"/>
    <property type="match status" value="1"/>
</dbReference>
<dbReference type="SUPFAM" id="SSF52821">
    <property type="entry name" value="Rhodanese/Cell cycle control phosphatase"/>
    <property type="match status" value="1"/>
</dbReference>
<dbReference type="PROSITE" id="PS50206">
    <property type="entry name" value="RHODANESE_3"/>
    <property type="match status" value="1"/>
</dbReference>
<reference key="1">
    <citation type="journal article" date="2008" name="PLoS ONE">
        <title>Comparative analysis of Acinetobacters: three genomes for three lifestyles.</title>
        <authorList>
            <person name="Vallenet D."/>
            <person name="Nordmann P."/>
            <person name="Barbe V."/>
            <person name="Poirel L."/>
            <person name="Mangenot S."/>
            <person name="Bataille E."/>
            <person name="Dossat C."/>
            <person name="Gas S."/>
            <person name="Kreimeyer A."/>
            <person name="Lenoble P."/>
            <person name="Oztas S."/>
            <person name="Poulain J."/>
            <person name="Segurens B."/>
            <person name="Robert C."/>
            <person name="Abergel C."/>
            <person name="Claverie J.-M."/>
            <person name="Raoult D."/>
            <person name="Medigue C."/>
            <person name="Weissenbach J."/>
            <person name="Cruveiller S."/>
        </authorList>
    </citation>
    <scope>NUCLEOTIDE SEQUENCE [LARGE SCALE GENOMIC DNA]</scope>
    <source>
        <strain>SDF</strain>
    </source>
</reference>
<name>TRHO_ACIBS</name>
<sequence>MEFSMNATVEQLAPVEQQATAGWVVAALYQFKEVQDPADLQQRLLDLVKTINLCGTLIVAGEGINGTVAGDREAIDTIHQFLLNEGFNAMEYKESHSSDKPFRKMKIKLKKEIVTLGVEVKPRDLVGHYLDPKEWNELIARDDVILIDTRNDYEYKAGTFKGAIDPKTETFREFPEYVKKELEQHKDKKIAMFCTGGIRCEKSTSLLLQEGFKEVYHLKGGILKYLEETPPDESLWEGECFVFDGRTAVTHGVEEGANIKCHACGWPLTPEESALPSYEHGVSCLYCIDKTTEKQKAGFRMRQSQIAAAKHKRL</sequence>
<gene>
    <name evidence="1" type="primary">trhO</name>
    <name type="ordered locus">ABSDF0768</name>
</gene>